<protein>
    <recommendedName>
        <fullName evidence="1">Protein-L-isoaspartate O-methyltransferase</fullName>
        <ecNumber evidence="1">2.1.1.77</ecNumber>
    </recommendedName>
    <alternativeName>
        <fullName evidence="1">L-isoaspartyl protein carboxyl methyltransferase</fullName>
    </alternativeName>
    <alternativeName>
        <fullName evidence="1">Protein L-isoaspartyl methyltransferase</fullName>
    </alternativeName>
    <alternativeName>
        <fullName evidence="1">Protein-beta-aspartate methyltransferase</fullName>
        <shortName evidence="1">PIMT</shortName>
    </alternativeName>
</protein>
<organism>
    <name type="scientific">Methanococcoides burtonii (strain DSM 6242 / NBRC 107633 / OCM 468 / ACE-M)</name>
    <dbReference type="NCBI Taxonomy" id="259564"/>
    <lineage>
        <taxon>Archaea</taxon>
        <taxon>Methanobacteriati</taxon>
        <taxon>Methanobacteriota</taxon>
        <taxon>Stenosarchaea group</taxon>
        <taxon>Methanomicrobia</taxon>
        <taxon>Methanosarcinales</taxon>
        <taxon>Methanosarcinaceae</taxon>
        <taxon>Methanococcoides</taxon>
    </lineage>
</organism>
<keyword id="KW-0963">Cytoplasm</keyword>
<keyword id="KW-0489">Methyltransferase</keyword>
<keyword id="KW-0949">S-adenosyl-L-methionine</keyword>
<keyword id="KW-0808">Transferase</keyword>
<accession>Q12UV0</accession>
<comment type="function">
    <text evidence="1">Catalyzes the methyl esterification of L-isoaspartyl residues in peptides and proteins that result from spontaneous decomposition of normal L-aspartyl and L-asparaginyl residues. It plays a role in the repair and/or degradation of damaged proteins.</text>
</comment>
<comment type="catalytic activity">
    <reaction evidence="1">
        <text>[protein]-L-isoaspartate + S-adenosyl-L-methionine = [protein]-L-isoaspartate alpha-methyl ester + S-adenosyl-L-homocysteine</text>
        <dbReference type="Rhea" id="RHEA:12705"/>
        <dbReference type="Rhea" id="RHEA-COMP:12143"/>
        <dbReference type="Rhea" id="RHEA-COMP:12144"/>
        <dbReference type="ChEBI" id="CHEBI:57856"/>
        <dbReference type="ChEBI" id="CHEBI:59789"/>
        <dbReference type="ChEBI" id="CHEBI:90596"/>
        <dbReference type="ChEBI" id="CHEBI:90598"/>
        <dbReference type="EC" id="2.1.1.77"/>
    </reaction>
</comment>
<comment type="subcellular location">
    <subcellularLocation>
        <location evidence="1">Cytoplasm</location>
    </subcellularLocation>
</comment>
<comment type="similarity">
    <text evidence="1">Belongs to the methyltransferase superfamily. L-isoaspartyl/D-aspartyl protein methyltransferase family.</text>
</comment>
<reference key="1">
    <citation type="journal article" date="2009" name="ISME J.">
        <title>The genome sequence of the psychrophilic archaeon, Methanococcoides burtonii: the role of genome evolution in cold adaptation.</title>
        <authorList>
            <person name="Allen M.A."/>
            <person name="Lauro F.M."/>
            <person name="Williams T.J."/>
            <person name="Burg D."/>
            <person name="Siddiqui K.S."/>
            <person name="De Francisci D."/>
            <person name="Chong K.W."/>
            <person name="Pilak O."/>
            <person name="Chew H.H."/>
            <person name="De Maere M.Z."/>
            <person name="Ting L."/>
            <person name="Katrib M."/>
            <person name="Ng C."/>
            <person name="Sowers K.R."/>
            <person name="Galperin M.Y."/>
            <person name="Anderson I.J."/>
            <person name="Ivanova N."/>
            <person name="Dalin E."/>
            <person name="Martinez M."/>
            <person name="Lapidus A."/>
            <person name="Hauser L."/>
            <person name="Land M."/>
            <person name="Thomas T."/>
            <person name="Cavicchioli R."/>
        </authorList>
    </citation>
    <scope>NUCLEOTIDE SEQUENCE [LARGE SCALE GENOMIC DNA]</scope>
    <source>
        <strain>DSM 6242 / NBRC 107633 / OCM 468 / ACE-M</strain>
    </source>
</reference>
<gene>
    <name evidence="1" type="primary">pcm</name>
    <name type="ordered locus">Mbur_1894</name>
</gene>
<evidence type="ECO:0000255" key="1">
    <source>
        <dbReference type="HAMAP-Rule" id="MF_00090"/>
    </source>
</evidence>
<dbReference type="EC" id="2.1.1.77" evidence="1"/>
<dbReference type="EMBL" id="CP000300">
    <property type="protein sequence ID" value="ABE52776.1"/>
    <property type="molecule type" value="Genomic_DNA"/>
</dbReference>
<dbReference type="SMR" id="Q12UV0"/>
<dbReference type="STRING" id="259564.Mbur_1894"/>
<dbReference type="KEGG" id="mbu:Mbur_1894"/>
<dbReference type="HOGENOM" id="CLU_055432_2_0_2"/>
<dbReference type="Proteomes" id="UP000001979">
    <property type="component" value="Chromosome"/>
</dbReference>
<dbReference type="GO" id="GO:0005737">
    <property type="term" value="C:cytoplasm"/>
    <property type="evidence" value="ECO:0007669"/>
    <property type="project" value="UniProtKB-SubCell"/>
</dbReference>
<dbReference type="GO" id="GO:0004719">
    <property type="term" value="F:protein-L-isoaspartate (D-aspartate) O-methyltransferase activity"/>
    <property type="evidence" value="ECO:0007669"/>
    <property type="project" value="UniProtKB-UniRule"/>
</dbReference>
<dbReference type="GO" id="GO:0032259">
    <property type="term" value="P:methylation"/>
    <property type="evidence" value="ECO:0007669"/>
    <property type="project" value="UniProtKB-KW"/>
</dbReference>
<dbReference type="GO" id="GO:0036211">
    <property type="term" value="P:protein modification process"/>
    <property type="evidence" value="ECO:0007669"/>
    <property type="project" value="UniProtKB-UniRule"/>
</dbReference>
<dbReference type="GO" id="GO:0030091">
    <property type="term" value="P:protein repair"/>
    <property type="evidence" value="ECO:0007669"/>
    <property type="project" value="UniProtKB-UniRule"/>
</dbReference>
<dbReference type="CDD" id="cd02440">
    <property type="entry name" value="AdoMet_MTases"/>
    <property type="match status" value="1"/>
</dbReference>
<dbReference type="FunFam" id="3.40.50.150:FF:000010">
    <property type="entry name" value="Protein-L-isoaspartate O-methyltransferase"/>
    <property type="match status" value="1"/>
</dbReference>
<dbReference type="Gene3D" id="3.40.50.150">
    <property type="entry name" value="Vaccinia Virus protein VP39"/>
    <property type="match status" value="1"/>
</dbReference>
<dbReference type="HAMAP" id="MF_00090">
    <property type="entry name" value="PIMT"/>
    <property type="match status" value="1"/>
</dbReference>
<dbReference type="InterPro" id="IPR000682">
    <property type="entry name" value="PCMT"/>
</dbReference>
<dbReference type="InterPro" id="IPR029063">
    <property type="entry name" value="SAM-dependent_MTases_sf"/>
</dbReference>
<dbReference type="NCBIfam" id="TIGR00080">
    <property type="entry name" value="pimt"/>
    <property type="match status" value="1"/>
</dbReference>
<dbReference type="NCBIfam" id="NF001453">
    <property type="entry name" value="PRK00312.1"/>
    <property type="match status" value="1"/>
</dbReference>
<dbReference type="NCBIfam" id="NF010549">
    <property type="entry name" value="PRK13942.1"/>
    <property type="match status" value="1"/>
</dbReference>
<dbReference type="PANTHER" id="PTHR11579">
    <property type="entry name" value="PROTEIN-L-ISOASPARTATE O-METHYLTRANSFERASE"/>
    <property type="match status" value="1"/>
</dbReference>
<dbReference type="PANTHER" id="PTHR11579:SF0">
    <property type="entry name" value="PROTEIN-L-ISOASPARTATE(D-ASPARTATE) O-METHYLTRANSFERASE"/>
    <property type="match status" value="1"/>
</dbReference>
<dbReference type="Pfam" id="PF01135">
    <property type="entry name" value="PCMT"/>
    <property type="match status" value="1"/>
</dbReference>
<dbReference type="SUPFAM" id="SSF53335">
    <property type="entry name" value="S-adenosyl-L-methionine-dependent methyltransferases"/>
    <property type="match status" value="1"/>
</dbReference>
<dbReference type="PROSITE" id="PS01279">
    <property type="entry name" value="PCMT"/>
    <property type="match status" value="1"/>
</dbReference>
<name>PIMT_METBU</name>
<feature type="chain" id="PRO_0000351968" description="Protein-L-isoaspartate O-methyltransferase">
    <location>
        <begin position="1"/>
        <end position="203"/>
    </location>
</feature>
<feature type="active site" evidence="1">
    <location>
        <position position="50"/>
    </location>
</feature>
<sequence length="203" mass="22065">MIRALKANGTDQRVLNAMKKVPRHLFLPEDMQSFAYADTPLPIGYDQTISAPHMVAIMCDLLKITEGMTILEIGSGSGYNAAVMAELAGENGKVYTVERIPELVDLARNNLERAGYSNVTVVHDDGSCGLPEHAPYDRIAVTSVAPEVPPPLREQLSKNGIMVIPVGTQYQTLVVVKKDSKGNITHKAMGEVIFVPLIGKYGF</sequence>
<proteinExistence type="inferred from homology"/>